<sequence length="170" mass="19149">MKQTERRILLGRVVGAFGVKGELKLESWTEPRSAIFRYQPWIVRAPSGQESVINGVRGRDQGKNLIAVFPGVADRDTVEAMHGTEIYVARSALPPPKPDEYYWVDLEELQVETVEGVKLGTVSHLFSTGSNDVVVVRGDRERMIPFVFPDFVKSVDFEANLIVVDWDPDF</sequence>
<keyword id="KW-0143">Chaperone</keyword>
<keyword id="KW-0963">Cytoplasm</keyword>
<keyword id="KW-0690">Ribosome biogenesis</keyword>
<keyword id="KW-0698">rRNA processing</keyword>
<evidence type="ECO:0000255" key="1">
    <source>
        <dbReference type="HAMAP-Rule" id="MF_00014"/>
    </source>
</evidence>
<gene>
    <name evidence="1" type="primary">rimM</name>
    <name type="ordered locus">XOO1220</name>
</gene>
<dbReference type="EMBL" id="AP008229">
    <property type="protein sequence ID" value="BAE67975.1"/>
    <property type="molecule type" value="Genomic_DNA"/>
</dbReference>
<dbReference type="RefSeq" id="WP_011407909.1">
    <property type="nucleotide sequence ID" value="NC_007705.1"/>
</dbReference>
<dbReference type="SMR" id="Q2P652"/>
<dbReference type="KEGG" id="xom:XOO1220"/>
<dbReference type="HOGENOM" id="CLU_077636_1_0_6"/>
<dbReference type="GO" id="GO:0005737">
    <property type="term" value="C:cytoplasm"/>
    <property type="evidence" value="ECO:0007669"/>
    <property type="project" value="UniProtKB-SubCell"/>
</dbReference>
<dbReference type="GO" id="GO:0005840">
    <property type="term" value="C:ribosome"/>
    <property type="evidence" value="ECO:0007669"/>
    <property type="project" value="InterPro"/>
</dbReference>
<dbReference type="GO" id="GO:0043022">
    <property type="term" value="F:ribosome binding"/>
    <property type="evidence" value="ECO:0007669"/>
    <property type="project" value="InterPro"/>
</dbReference>
<dbReference type="GO" id="GO:0042274">
    <property type="term" value="P:ribosomal small subunit biogenesis"/>
    <property type="evidence" value="ECO:0007669"/>
    <property type="project" value="UniProtKB-UniRule"/>
</dbReference>
<dbReference type="GO" id="GO:0006364">
    <property type="term" value="P:rRNA processing"/>
    <property type="evidence" value="ECO:0007669"/>
    <property type="project" value="UniProtKB-UniRule"/>
</dbReference>
<dbReference type="Gene3D" id="2.30.30.240">
    <property type="entry name" value="PRC-barrel domain"/>
    <property type="match status" value="1"/>
</dbReference>
<dbReference type="Gene3D" id="2.40.30.60">
    <property type="entry name" value="RimM"/>
    <property type="match status" value="1"/>
</dbReference>
<dbReference type="HAMAP" id="MF_00014">
    <property type="entry name" value="Ribosome_mat_RimM"/>
    <property type="match status" value="1"/>
</dbReference>
<dbReference type="InterPro" id="IPR011033">
    <property type="entry name" value="PRC_barrel-like_sf"/>
</dbReference>
<dbReference type="InterPro" id="IPR056792">
    <property type="entry name" value="PRC_RimM"/>
</dbReference>
<dbReference type="InterPro" id="IPR011961">
    <property type="entry name" value="RimM"/>
</dbReference>
<dbReference type="InterPro" id="IPR002676">
    <property type="entry name" value="RimM_N"/>
</dbReference>
<dbReference type="InterPro" id="IPR036976">
    <property type="entry name" value="RimM_N_sf"/>
</dbReference>
<dbReference type="InterPro" id="IPR009000">
    <property type="entry name" value="Transl_B-barrel_sf"/>
</dbReference>
<dbReference type="NCBIfam" id="TIGR02273">
    <property type="entry name" value="16S_RimM"/>
    <property type="match status" value="1"/>
</dbReference>
<dbReference type="PANTHER" id="PTHR33692">
    <property type="entry name" value="RIBOSOME MATURATION FACTOR RIMM"/>
    <property type="match status" value="1"/>
</dbReference>
<dbReference type="PANTHER" id="PTHR33692:SF1">
    <property type="entry name" value="RIBOSOME MATURATION FACTOR RIMM"/>
    <property type="match status" value="1"/>
</dbReference>
<dbReference type="Pfam" id="PF24986">
    <property type="entry name" value="PRC_RimM"/>
    <property type="match status" value="1"/>
</dbReference>
<dbReference type="Pfam" id="PF01782">
    <property type="entry name" value="RimM"/>
    <property type="match status" value="1"/>
</dbReference>
<dbReference type="SUPFAM" id="SSF50346">
    <property type="entry name" value="PRC-barrel domain"/>
    <property type="match status" value="1"/>
</dbReference>
<dbReference type="SUPFAM" id="SSF50447">
    <property type="entry name" value="Translation proteins"/>
    <property type="match status" value="1"/>
</dbReference>
<name>RIMM_XANOM</name>
<comment type="function">
    <text evidence="1">An accessory protein needed during the final step in the assembly of 30S ribosomal subunit, possibly for assembly of the head region. Essential for efficient processing of 16S rRNA. May be needed both before and after RbfA during the maturation of 16S rRNA. It has affinity for free ribosomal 30S subunits but not for 70S ribosomes.</text>
</comment>
<comment type="subunit">
    <text evidence="1">Binds ribosomal protein uS19.</text>
</comment>
<comment type="subcellular location">
    <subcellularLocation>
        <location evidence="1">Cytoplasm</location>
    </subcellularLocation>
</comment>
<comment type="domain">
    <text evidence="1">The PRC barrel domain binds ribosomal protein uS19.</text>
</comment>
<comment type="similarity">
    <text evidence="1">Belongs to the RimM family.</text>
</comment>
<feature type="chain" id="PRO_0000244189" description="Ribosome maturation factor RimM">
    <location>
        <begin position="1"/>
        <end position="170"/>
    </location>
</feature>
<feature type="domain" description="PRC barrel" evidence="1">
    <location>
        <begin position="98"/>
        <end position="170"/>
    </location>
</feature>
<organism>
    <name type="scientific">Xanthomonas oryzae pv. oryzae (strain MAFF 311018)</name>
    <dbReference type="NCBI Taxonomy" id="342109"/>
    <lineage>
        <taxon>Bacteria</taxon>
        <taxon>Pseudomonadati</taxon>
        <taxon>Pseudomonadota</taxon>
        <taxon>Gammaproteobacteria</taxon>
        <taxon>Lysobacterales</taxon>
        <taxon>Lysobacteraceae</taxon>
        <taxon>Xanthomonas</taxon>
    </lineage>
</organism>
<reference key="1">
    <citation type="journal article" date="2005" name="Jpn. Agric. Res. Q.">
        <title>Genome sequence of Xanthomonas oryzae pv. oryzae suggests contribution of large numbers of effector genes and insertion sequences to its race diversity.</title>
        <authorList>
            <person name="Ochiai H."/>
            <person name="Inoue Y."/>
            <person name="Takeya M."/>
            <person name="Sasaki A."/>
            <person name="Kaku H."/>
        </authorList>
    </citation>
    <scope>NUCLEOTIDE SEQUENCE [LARGE SCALE GENOMIC DNA]</scope>
    <source>
        <strain>MAFF 311018</strain>
    </source>
</reference>
<protein>
    <recommendedName>
        <fullName evidence="1">Ribosome maturation factor RimM</fullName>
    </recommendedName>
</protein>
<proteinExistence type="inferred from homology"/>
<accession>Q2P652</accession>